<name>RR14_OLIPU</name>
<evidence type="ECO:0000255" key="1">
    <source>
        <dbReference type="HAMAP-Rule" id="MF_00537"/>
    </source>
</evidence>
<evidence type="ECO:0000305" key="2"/>
<proteinExistence type="inferred from homology"/>
<sequence>MAKKSLIYREKKRQKLEKKYHLIRRSSKKEISKIPSLSEKWKIHGKLQSPPRNSAPTRLHRRCFSTGRPRANYRDFGLSGHILREMVHACLLPGATRSSW</sequence>
<feature type="chain" id="PRO_0000354434" description="Small ribosomal subunit protein uS14c">
    <location>
        <begin position="1"/>
        <end position="100"/>
    </location>
</feature>
<comment type="function">
    <text evidence="1">Binds 16S rRNA, required for the assembly of 30S particles.</text>
</comment>
<comment type="subunit">
    <text evidence="1">Part of the 30S ribosomal subunit.</text>
</comment>
<comment type="subcellular location">
    <subcellularLocation>
        <location>Plastid</location>
        <location>Chloroplast</location>
    </subcellularLocation>
</comment>
<comment type="similarity">
    <text evidence="1">Belongs to the universal ribosomal protein uS14 family.</text>
</comment>
<organism>
    <name type="scientific">Olimarabidopsis pumila</name>
    <name type="common">Dwarf rocket</name>
    <name type="synonym">Arabidopsis griffithiana</name>
    <dbReference type="NCBI Taxonomy" id="74718"/>
    <lineage>
        <taxon>Eukaryota</taxon>
        <taxon>Viridiplantae</taxon>
        <taxon>Streptophyta</taxon>
        <taxon>Embryophyta</taxon>
        <taxon>Tracheophyta</taxon>
        <taxon>Spermatophyta</taxon>
        <taxon>Magnoliopsida</taxon>
        <taxon>eudicotyledons</taxon>
        <taxon>Gunneridae</taxon>
        <taxon>Pentapetalae</taxon>
        <taxon>rosids</taxon>
        <taxon>malvids</taxon>
        <taxon>Brassicales</taxon>
        <taxon>Brassicaceae</taxon>
        <taxon>Alyssopsideae</taxon>
        <taxon>Olimarabidopsis</taxon>
    </lineage>
</organism>
<protein>
    <recommendedName>
        <fullName evidence="1">Small ribosomal subunit protein uS14c</fullName>
    </recommendedName>
    <alternativeName>
        <fullName evidence="2">30S ribosomal protein S14, chloroplastic</fullName>
    </alternativeName>
</protein>
<accession>A4QJT1</accession>
<dbReference type="EMBL" id="AP009368">
    <property type="protein sequence ID" value="BAF49937.1"/>
    <property type="molecule type" value="Genomic_DNA"/>
</dbReference>
<dbReference type="RefSeq" id="YP_001123113.1">
    <property type="nucleotide sequence ID" value="NC_009267.1"/>
</dbReference>
<dbReference type="SMR" id="A4QJT1"/>
<dbReference type="GeneID" id="4962362"/>
<dbReference type="GO" id="GO:0009507">
    <property type="term" value="C:chloroplast"/>
    <property type="evidence" value="ECO:0007669"/>
    <property type="project" value="UniProtKB-SubCell"/>
</dbReference>
<dbReference type="GO" id="GO:0015935">
    <property type="term" value="C:small ribosomal subunit"/>
    <property type="evidence" value="ECO:0007669"/>
    <property type="project" value="TreeGrafter"/>
</dbReference>
<dbReference type="GO" id="GO:0019843">
    <property type="term" value="F:rRNA binding"/>
    <property type="evidence" value="ECO:0007669"/>
    <property type="project" value="UniProtKB-UniRule"/>
</dbReference>
<dbReference type="GO" id="GO:0003735">
    <property type="term" value="F:structural constituent of ribosome"/>
    <property type="evidence" value="ECO:0007669"/>
    <property type="project" value="InterPro"/>
</dbReference>
<dbReference type="GO" id="GO:0006412">
    <property type="term" value="P:translation"/>
    <property type="evidence" value="ECO:0007669"/>
    <property type="project" value="UniProtKB-UniRule"/>
</dbReference>
<dbReference type="FunFam" id="1.10.287.1480:FF:000001">
    <property type="entry name" value="30S ribosomal protein S14"/>
    <property type="match status" value="1"/>
</dbReference>
<dbReference type="Gene3D" id="1.10.287.1480">
    <property type="match status" value="1"/>
</dbReference>
<dbReference type="HAMAP" id="MF_00537">
    <property type="entry name" value="Ribosomal_uS14_1"/>
    <property type="match status" value="1"/>
</dbReference>
<dbReference type="InterPro" id="IPR001209">
    <property type="entry name" value="Ribosomal_uS14"/>
</dbReference>
<dbReference type="InterPro" id="IPR023036">
    <property type="entry name" value="Ribosomal_uS14_bac/plastid"/>
</dbReference>
<dbReference type="InterPro" id="IPR018271">
    <property type="entry name" value="Ribosomal_uS14_CS"/>
</dbReference>
<dbReference type="NCBIfam" id="NF006477">
    <property type="entry name" value="PRK08881.1"/>
    <property type="match status" value="1"/>
</dbReference>
<dbReference type="PANTHER" id="PTHR19836">
    <property type="entry name" value="30S RIBOSOMAL PROTEIN S14"/>
    <property type="match status" value="1"/>
</dbReference>
<dbReference type="PANTHER" id="PTHR19836:SF19">
    <property type="entry name" value="SMALL RIBOSOMAL SUBUNIT PROTEIN US14M"/>
    <property type="match status" value="1"/>
</dbReference>
<dbReference type="Pfam" id="PF00253">
    <property type="entry name" value="Ribosomal_S14"/>
    <property type="match status" value="1"/>
</dbReference>
<dbReference type="SUPFAM" id="SSF57716">
    <property type="entry name" value="Glucocorticoid receptor-like (DNA-binding domain)"/>
    <property type="match status" value="1"/>
</dbReference>
<dbReference type="PROSITE" id="PS00527">
    <property type="entry name" value="RIBOSOMAL_S14"/>
    <property type="match status" value="1"/>
</dbReference>
<gene>
    <name evidence="1" type="primary">rps14</name>
</gene>
<reference key="1">
    <citation type="submission" date="2007-03" db="EMBL/GenBank/DDBJ databases">
        <title>Sequence analysis of Arabidopsis pumila JS2 chloroplast DNA.</title>
        <authorList>
            <person name="Hosouchi T."/>
            <person name="Tsuruoka H."/>
            <person name="Kotani H."/>
        </authorList>
    </citation>
    <scope>NUCLEOTIDE SEQUENCE [LARGE SCALE GENOMIC DNA]</scope>
</reference>
<geneLocation type="chloroplast"/>
<keyword id="KW-0150">Chloroplast</keyword>
<keyword id="KW-0934">Plastid</keyword>
<keyword id="KW-0687">Ribonucleoprotein</keyword>
<keyword id="KW-0689">Ribosomal protein</keyword>
<keyword id="KW-0694">RNA-binding</keyword>
<keyword id="KW-0699">rRNA-binding</keyword>